<proteinExistence type="evidence at transcript level"/>
<comment type="function">
    <text evidence="2">Together with the alpha chain CGA constitutes follitropin, the follicle-stimulating hormone, and provides its biological specificity to the hormone heterodimer. Binds FSHR, a G protein-coupled receptor, on target cells to activate downstream signaling pathways. Follitropin is involved in follicle development and spermatogenesis in reproductive organs.</text>
</comment>
<comment type="subunit">
    <text evidence="2">Heterodimer. The active follitropin is a heterodimer composed of an alpha chain/CGA shared with other hormones and a unique beta chain/FSHB shown here.</text>
</comment>
<comment type="subcellular location">
    <subcellularLocation>
        <location evidence="2">Secreted</location>
    </subcellularLocation>
    <text evidence="2">Efficient secretion requires dimerization with CGA.</text>
</comment>
<comment type="similarity">
    <text evidence="3">Belongs to the glycoprotein hormones subunit beta family.</text>
</comment>
<keyword id="KW-1015">Disulfide bond</keyword>
<keyword id="KW-0325">Glycoprotein</keyword>
<keyword id="KW-0372">Hormone</keyword>
<keyword id="KW-0964">Secreted</keyword>
<keyword id="KW-0732">Signal</keyword>
<protein>
    <recommendedName>
        <fullName>Follitropin subunit beta</fullName>
    </recommendedName>
    <alternativeName>
        <fullName>Follicle-stimulating hormone beta subunit</fullName>
        <shortName>FSH-B</shortName>
        <shortName>FSH-beta</shortName>
    </alternativeName>
    <alternativeName>
        <fullName>Follitropin beta chain</fullName>
    </alternativeName>
</protein>
<organism>
    <name type="scientific">Trichosurus vulpecula</name>
    <name type="common">Brush-tailed possum</name>
    <dbReference type="NCBI Taxonomy" id="9337"/>
    <lineage>
        <taxon>Eukaryota</taxon>
        <taxon>Metazoa</taxon>
        <taxon>Chordata</taxon>
        <taxon>Craniata</taxon>
        <taxon>Vertebrata</taxon>
        <taxon>Euteleostomi</taxon>
        <taxon>Mammalia</taxon>
        <taxon>Metatheria</taxon>
        <taxon>Diprotodontia</taxon>
        <taxon>Phalangeridae</taxon>
        <taxon>Trichosurus</taxon>
    </lineage>
</organism>
<feature type="signal peptide" evidence="1">
    <location>
        <begin position="1"/>
        <end position="20"/>
    </location>
</feature>
<feature type="chain" id="PRO_0000011718" description="Follitropin subunit beta">
    <location>
        <begin position="21"/>
        <end position="129"/>
    </location>
</feature>
<feature type="glycosylation site" description="N-linked (GlcNAc...) asparagine" evidence="2">
    <location>
        <position position="25"/>
    </location>
</feature>
<feature type="glycosylation site" description="N-linked (GlcNAc...) asparagine" evidence="2">
    <location>
        <position position="42"/>
    </location>
</feature>
<feature type="disulfide bond" evidence="2">
    <location>
        <begin position="21"/>
        <end position="69"/>
    </location>
</feature>
<feature type="disulfide bond" evidence="2">
    <location>
        <begin position="35"/>
        <end position="84"/>
    </location>
</feature>
<feature type="disulfide bond" evidence="2">
    <location>
        <begin position="38"/>
        <end position="122"/>
    </location>
</feature>
<feature type="disulfide bond" evidence="2">
    <location>
        <begin position="46"/>
        <end position="100"/>
    </location>
</feature>
<feature type="disulfide bond" evidence="2">
    <location>
        <begin position="50"/>
        <end position="102"/>
    </location>
</feature>
<feature type="disulfide bond" evidence="2">
    <location>
        <begin position="105"/>
        <end position="112"/>
    </location>
</feature>
<name>FSHB_TRIVU</name>
<accession>O46430</accession>
<sequence>MKTAQFYVLFFCWKAIWCNGCMLTNITISVEREECEFCISINTTWCSGYCHTRDLVYKDPIRPNVQKTCTFKEFVYETVNLPGCAKQADSLYSYPVATACHCGSCDTDSTDCTVRGLGPSYCSFNERKE</sequence>
<gene>
    <name type="primary">FSHB</name>
</gene>
<evidence type="ECO:0000250" key="1"/>
<evidence type="ECO:0000250" key="2">
    <source>
        <dbReference type="UniProtKB" id="P01225"/>
    </source>
</evidence>
<evidence type="ECO:0000305" key="3"/>
<dbReference type="EMBL" id="AF008550">
    <property type="protein sequence ID" value="AAC71065.1"/>
    <property type="molecule type" value="mRNA"/>
</dbReference>
<dbReference type="SMR" id="O46430"/>
<dbReference type="GlyCosmos" id="O46430">
    <property type="glycosylation" value="2 sites, No reported glycans"/>
</dbReference>
<dbReference type="GO" id="GO:0005737">
    <property type="term" value="C:cytoplasm"/>
    <property type="evidence" value="ECO:0007669"/>
    <property type="project" value="TreeGrafter"/>
</dbReference>
<dbReference type="GO" id="GO:0005615">
    <property type="term" value="C:extracellular space"/>
    <property type="evidence" value="ECO:0000250"/>
    <property type="project" value="UniProtKB"/>
</dbReference>
<dbReference type="GO" id="GO:0016914">
    <property type="term" value="C:follicle-stimulating hormone complex"/>
    <property type="evidence" value="ECO:0000250"/>
    <property type="project" value="UniProtKB"/>
</dbReference>
<dbReference type="GO" id="GO:0016913">
    <property type="term" value="F:follicle-stimulating hormone activity"/>
    <property type="evidence" value="ECO:0000250"/>
    <property type="project" value="UniProtKB"/>
</dbReference>
<dbReference type="GO" id="GO:0042699">
    <property type="term" value="P:follicle-stimulating hormone signaling pathway"/>
    <property type="evidence" value="ECO:0007669"/>
    <property type="project" value="TreeGrafter"/>
</dbReference>
<dbReference type="GO" id="GO:0007186">
    <property type="term" value="P:G protein-coupled receptor signaling pathway"/>
    <property type="evidence" value="ECO:0000250"/>
    <property type="project" value="UniProtKB"/>
</dbReference>
<dbReference type="GO" id="GO:0010469">
    <property type="term" value="P:regulation of signaling receptor activity"/>
    <property type="evidence" value="ECO:0000250"/>
    <property type="project" value="UniProtKB"/>
</dbReference>
<dbReference type="CDD" id="cd00069">
    <property type="entry name" value="GHB_like"/>
    <property type="match status" value="1"/>
</dbReference>
<dbReference type="FunFam" id="2.10.90.10:FF:000007">
    <property type="entry name" value="Luteinizing hormone beta subunit"/>
    <property type="match status" value="1"/>
</dbReference>
<dbReference type="Gene3D" id="2.10.90.10">
    <property type="entry name" value="Cystine-knot cytokines"/>
    <property type="match status" value="1"/>
</dbReference>
<dbReference type="InterPro" id="IPR029034">
    <property type="entry name" value="Cystine-knot_cytokine"/>
</dbReference>
<dbReference type="InterPro" id="IPR006208">
    <property type="entry name" value="Glyco_hormone_CN"/>
</dbReference>
<dbReference type="InterPro" id="IPR001545">
    <property type="entry name" value="Gonadotropin_bsu"/>
</dbReference>
<dbReference type="InterPro" id="IPR018245">
    <property type="entry name" value="Gonadotropin_bsu_CS"/>
</dbReference>
<dbReference type="PANTHER" id="PTHR11515:SF17">
    <property type="entry name" value="FOLLITROPIN SUBUNIT BETA"/>
    <property type="match status" value="1"/>
</dbReference>
<dbReference type="PANTHER" id="PTHR11515">
    <property type="entry name" value="GLYCOPROTEIN HORMONE BETA CHAIN"/>
    <property type="match status" value="1"/>
</dbReference>
<dbReference type="Pfam" id="PF00007">
    <property type="entry name" value="Cys_knot"/>
    <property type="match status" value="1"/>
</dbReference>
<dbReference type="SMART" id="SM00068">
    <property type="entry name" value="GHB"/>
    <property type="match status" value="1"/>
</dbReference>
<dbReference type="SUPFAM" id="SSF57501">
    <property type="entry name" value="Cystine-knot cytokines"/>
    <property type="match status" value="1"/>
</dbReference>
<dbReference type="PROSITE" id="PS00261">
    <property type="entry name" value="GLYCO_HORMONE_BETA_1"/>
    <property type="match status" value="1"/>
</dbReference>
<dbReference type="PROSITE" id="PS00689">
    <property type="entry name" value="GLYCO_HORMONE_BETA_2"/>
    <property type="match status" value="1"/>
</dbReference>
<reference key="1">
    <citation type="journal article" date="1997" name="Reprod. Fertil. Dev.">
        <title>The follicle-stimulating hormone beta-subunit gene of the common brushtail possum (Trichosurus vulpecula): analysis of cDNA sequence and expression.</title>
        <authorList>
            <person name="Lawrence S.B."/>
            <person name="Vanmontfort D.M.J.L."/>
            <person name="Tisdall D.J."/>
            <person name="McNatty K.P."/>
            <person name="Fidler A.E."/>
        </authorList>
    </citation>
    <scope>NUCLEOTIDE SEQUENCE [MRNA]</scope>
</reference>